<organism>
    <name type="scientific">Ricinus communis</name>
    <name type="common">Castor bean</name>
    <dbReference type="NCBI Taxonomy" id="3988"/>
    <lineage>
        <taxon>Eukaryota</taxon>
        <taxon>Viridiplantae</taxon>
        <taxon>Streptophyta</taxon>
        <taxon>Embryophyta</taxon>
        <taxon>Tracheophyta</taxon>
        <taxon>Spermatophyta</taxon>
        <taxon>Magnoliopsida</taxon>
        <taxon>eudicotyledons</taxon>
        <taxon>Gunneridae</taxon>
        <taxon>Pentapetalae</taxon>
        <taxon>rosids</taxon>
        <taxon>fabids</taxon>
        <taxon>Malpighiales</taxon>
        <taxon>Euphorbiaceae</taxon>
        <taxon>Acalyphoideae</taxon>
        <taxon>Acalypheae</taxon>
        <taxon>Ricinus</taxon>
    </lineage>
</organism>
<comment type="function">
    <text>Plant non-specific lipid-transfer proteins transfer phospholipids as well as galactolipids across membranes. May play a role in wax or cutin deposition in the cell walls of expanding epidermal cells and certain secretory tissues.</text>
</comment>
<comment type="similarity">
    <text evidence="2">Belongs to the plant LTP family.</text>
</comment>
<reference key="1">
    <citation type="journal article" date="1992" name="Planta">
        <title>The lipid-transfer protein C of Ricinus communis L.: isolation of two cDNA sequences which are strongly and exclusively expressed in cotyledons after germination.</title>
        <authorList>
            <person name="Weig A."/>
            <person name="Komor E."/>
        </authorList>
    </citation>
    <scope>NUCLEOTIDE SEQUENCE [MRNA]</scope>
</reference>
<dbReference type="EMBL" id="M86353">
    <property type="protein sequence ID" value="AAA33876.1"/>
    <property type="molecule type" value="mRNA"/>
</dbReference>
<dbReference type="PIR" id="T10080">
    <property type="entry name" value="T10080"/>
</dbReference>
<dbReference type="RefSeq" id="NP_001411075.1">
    <property type="nucleotide sequence ID" value="NM_001424146.1"/>
</dbReference>
<dbReference type="RefSeq" id="XP_002533768.1">
    <property type="nucleotide sequence ID" value="XM_002533722.2"/>
</dbReference>
<dbReference type="SMR" id="Q43119"/>
<dbReference type="GeneID" id="8287898"/>
<dbReference type="KEGG" id="rcu:8287898"/>
<dbReference type="eggNOG" id="ENOG502S1F3">
    <property type="taxonomic scope" value="Eukaryota"/>
</dbReference>
<dbReference type="OMA" id="MITNCET"/>
<dbReference type="OrthoDB" id="1917968at2759"/>
<dbReference type="GO" id="GO:0008289">
    <property type="term" value="F:lipid binding"/>
    <property type="evidence" value="ECO:0007669"/>
    <property type="project" value="UniProtKB-KW"/>
</dbReference>
<dbReference type="GO" id="GO:0006869">
    <property type="term" value="P:lipid transport"/>
    <property type="evidence" value="ECO:0007669"/>
    <property type="project" value="InterPro"/>
</dbReference>
<dbReference type="CDD" id="cd01960">
    <property type="entry name" value="nsLTP1"/>
    <property type="match status" value="1"/>
</dbReference>
<dbReference type="Gene3D" id="1.10.110.10">
    <property type="entry name" value="Plant lipid-transfer and hydrophobic proteins"/>
    <property type="match status" value="1"/>
</dbReference>
<dbReference type="InterPro" id="IPR036312">
    <property type="entry name" value="Bifun_inhib/LTP/seed_sf"/>
</dbReference>
<dbReference type="InterPro" id="IPR016140">
    <property type="entry name" value="Bifunc_inhib/LTP/seed_store"/>
</dbReference>
<dbReference type="InterPro" id="IPR000528">
    <property type="entry name" value="Plant_nsLTP"/>
</dbReference>
<dbReference type="PANTHER" id="PTHR33076">
    <property type="entry name" value="NON-SPECIFIC LIPID-TRANSFER PROTEIN 2-RELATED"/>
    <property type="match status" value="1"/>
</dbReference>
<dbReference type="Pfam" id="PF00234">
    <property type="entry name" value="Tryp_alpha_amyl"/>
    <property type="match status" value="1"/>
</dbReference>
<dbReference type="PRINTS" id="PR00382">
    <property type="entry name" value="LIPIDTRNSFER"/>
</dbReference>
<dbReference type="SMART" id="SM00499">
    <property type="entry name" value="AAI"/>
    <property type="match status" value="1"/>
</dbReference>
<dbReference type="SUPFAM" id="SSF47699">
    <property type="entry name" value="Bifunctional inhibitor/lipid-transfer protein/seed storage 2S albumin"/>
    <property type="match status" value="1"/>
</dbReference>
<dbReference type="PROSITE" id="PS00597">
    <property type="entry name" value="PLANT_LTP"/>
    <property type="match status" value="1"/>
</dbReference>
<proteinExistence type="inferred from homology"/>
<name>NLTPD_RICCO</name>
<evidence type="ECO:0000250" key="1"/>
<evidence type="ECO:0000305" key="2"/>
<feature type="signal peptide" evidence="1">
    <location>
        <begin position="1"/>
        <end position="24"/>
    </location>
</feature>
<feature type="chain" id="PRO_0000018406" description="Non-specific lipid-transfer protein D, cotyledon-specific isoform">
    <location>
        <begin position="25"/>
        <end position="116"/>
    </location>
</feature>
<feature type="disulfide bond" evidence="1">
    <location>
        <begin position="28"/>
        <end position="76"/>
    </location>
</feature>
<feature type="disulfide bond" evidence="1">
    <location>
        <begin position="38"/>
        <end position="53"/>
    </location>
</feature>
<feature type="disulfide bond" evidence="1">
    <location>
        <begin position="54"/>
        <end position="98"/>
    </location>
</feature>
<feature type="disulfide bond" evidence="1">
    <location>
        <begin position="74"/>
        <end position="112"/>
    </location>
</feature>
<protein>
    <recommendedName>
        <fullName>Non-specific lipid-transfer protein D, cotyledon-specific isoform</fullName>
        <shortName>NS-LTP D</shortName>
    </recommendedName>
</protein>
<sequence>MKNIFFSVFFLLSFLLCLANVSEAAVPCSTVDMKAAACVGFATGKDSKPSSACCTGLQQLAQTVKSVDDKKAICRCLKASSKSLGIKDQFLSKIPAACNIKVGFPVSTATNCETIH</sequence>
<accession>Q43119</accession>
<keyword id="KW-1015">Disulfide bond</keyword>
<keyword id="KW-0446">Lipid-binding</keyword>
<keyword id="KW-0732">Signal</keyword>
<keyword id="KW-0813">Transport</keyword>